<protein>
    <recommendedName>
        <fullName evidence="1">Small ribosomal subunit protein uS10</fullName>
    </recommendedName>
    <alternativeName>
        <fullName evidence="2">30S ribosomal protein S10</fullName>
    </alternativeName>
</protein>
<accession>A2BYN3</accession>
<organism>
    <name type="scientific">Prochlorococcus marinus (strain MIT 9515)</name>
    <dbReference type="NCBI Taxonomy" id="167542"/>
    <lineage>
        <taxon>Bacteria</taxon>
        <taxon>Bacillati</taxon>
        <taxon>Cyanobacteriota</taxon>
        <taxon>Cyanophyceae</taxon>
        <taxon>Synechococcales</taxon>
        <taxon>Prochlorococcaceae</taxon>
        <taxon>Prochlorococcus</taxon>
    </lineage>
</organism>
<reference key="1">
    <citation type="journal article" date="2007" name="PLoS Genet.">
        <title>Patterns and implications of gene gain and loss in the evolution of Prochlorococcus.</title>
        <authorList>
            <person name="Kettler G.C."/>
            <person name="Martiny A.C."/>
            <person name="Huang K."/>
            <person name="Zucker J."/>
            <person name="Coleman M.L."/>
            <person name="Rodrigue S."/>
            <person name="Chen F."/>
            <person name="Lapidus A."/>
            <person name="Ferriera S."/>
            <person name="Johnson J."/>
            <person name="Steglich C."/>
            <person name="Church G.M."/>
            <person name="Richardson P."/>
            <person name="Chisholm S.W."/>
        </authorList>
    </citation>
    <scope>NUCLEOTIDE SEQUENCE [LARGE SCALE GENOMIC DNA]</scope>
    <source>
        <strain>MIT 9515</strain>
    </source>
</reference>
<comment type="function">
    <text evidence="1">Involved in the binding of tRNA to the ribosomes.</text>
</comment>
<comment type="subunit">
    <text evidence="1">Part of the 30S ribosomal subunit.</text>
</comment>
<comment type="similarity">
    <text evidence="1">Belongs to the universal ribosomal protein uS10 family.</text>
</comment>
<proteinExistence type="inferred from homology"/>
<sequence>MTTSLAQQKIRIRLKAFDRRMLDLSCDKIIQTADTTAASAIGPIPLPTKRKIYCVLRSPHVDKDSREHFETRTHRRIIDIYSPSAKTIDALMKLDLPSGVDIEVKL</sequence>
<dbReference type="EMBL" id="CP000552">
    <property type="protein sequence ID" value="ABM72894.1"/>
    <property type="molecule type" value="Genomic_DNA"/>
</dbReference>
<dbReference type="RefSeq" id="WP_011820987.1">
    <property type="nucleotide sequence ID" value="NC_008817.1"/>
</dbReference>
<dbReference type="SMR" id="A2BYN3"/>
<dbReference type="STRING" id="167542.P9515_16871"/>
<dbReference type="GeneID" id="60202071"/>
<dbReference type="KEGG" id="pmc:P9515_16871"/>
<dbReference type="eggNOG" id="COG0051">
    <property type="taxonomic scope" value="Bacteria"/>
</dbReference>
<dbReference type="HOGENOM" id="CLU_122625_1_3_3"/>
<dbReference type="OrthoDB" id="9804464at2"/>
<dbReference type="Proteomes" id="UP000001589">
    <property type="component" value="Chromosome"/>
</dbReference>
<dbReference type="GO" id="GO:1990904">
    <property type="term" value="C:ribonucleoprotein complex"/>
    <property type="evidence" value="ECO:0007669"/>
    <property type="project" value="UniProtKB-KW"/>
</dbReference>
<dbReference type="GO" id="GO:0005840">
    <property type="term" value="C:ribosome"/>
    <property type="evidence" value="ECO:0007669"/>
    <property type="project" value="UniProtKB-KW"/>
</dbReference>
<dbReference type="GO" id="GO:0003735">
    <property type="term" value="F:structural constituent of ribosome"/>
    <property type="evidence" value="ECO:0007669"/>
    <property type="project" value="InterPro"/>
</dbReference>
<dbReference type="GO" id="GO:0000049">
    <property type="term" value="F:tRNA binding"/>
    <property type="evidence" value="ECO:0007669"/>
    <property type="project" value="UniProtKB-UniRule"/>
</dbReference>
<dbReference type="GO" id="GO:0006412">
    <property type="term" value="P:translation"/>
    <property type="evidence" value="ECO:0007669"/>
    <property type="project" value="UniProtKB-UniRule"/>
</dbReference>
<dbReference type="FunFam" id="3.30.70.600:FF:000001">
    <property type="entry name" value="30S ribosomal protein S10"/>
    <property type="match status" value="1"/>
</dbReference>
<dbReference type="Gene3D" id="3.30.70.600">
    <property type="entry name" value="Ribosomal protein S10 domain"/>
    <property type="match status" value="1"/>
</dbReference>
<dbReference type="HAMAP" id="MF_00508">
    <property type="entry name" value="Ribosomal_uS10"/>
    <property type="match status" value="1"/>
</dbReference>
<dbReference type="InterPro" id="IPR001848">
    <property type="entry name" value="Ribosomal_uS10"/>
</dbReference>
<dbReference type="InterPro" id="IPR027486">
    <property type="entry name" value="Ribosomal_uS10_dom"/>
</dbReference>
<dbReference type="InterPro" id="IPR036838">
    <property type="entry name" value="Ribosomal_uS10_dom_sf"/>
</dbReference>
<dbReference type="NCBIfam" id="NF001861">
    <property type="entry name" value="PRK00596.1"/>
    <property type="match status" value="1"/>
</dbReference>
<dbReference type="NCBIfam" id="TIGR01049">
    <property type="entry name" value="rpsJ_bact"/>
    <property type="match status" value="1"/>
</dbReference>
<dbReference type="PANTHER" id="PTHR11700">
    <property type="entry name" value="30S RIBOSOMAL PROTEIN S10 FAMILY MEMBER"/>
    <property type="match status" value="1"/>
</dbReference>
<dbReference type="Pfam" id="PF00338">
    <property type="entry name" value="Ribosomal_S10"/>
    <property type="match status" value="1"/>
</dbReference>
<dbReference type="PRINTS" id="PR00971">
    <property type="entry name" value="RIBOSOMALS10"/>
</dbReference>
<dbReference type="SMART" id="SM01403">
    <property type="entry name" value="Ribosomal_S10"/>
    <property type="match status" value="1"/>
</dbReference>
<dbReference type="SUPFAM" id="SSF54999">
    <property type="entry name" value="Ribosomal protein S10"/>
    <property type="match status" value="1"/>
</dbReference>
<evidence type="ECO:0000255" key="1">
    <source>
        <dbReference type="HAMAP-Rule" id="MF_00508"/>
    </source>
</evidence>
<evidence type="ECO:0000305" key="2"/>
<gene>
    <name evidence="1" type="primary">rpsJ</name>
    <name evidence="1" type="synonym">rps10</name>
    <name type="ordered locus">P9515_16871</name>
</gene>
<feature type="chain" id="PRO_1000015081" description="Small ribosomal subunit protein uS10">
    <location>
        <begin position="1"/>
        <end position="106"/>
    </location>
</feature>
<name>RS10_PROM5</name>
<keyword id="KW-0687">Ribonucleoprotein</keyword>
<keyword id="KW-0689">Ribosomal protein</keyword>